<reference key="1">
    <citation type="journal article" date="1998" name="Insect Biochem. Mol. Biol.">
        <title>Vitelline envelope genes of the yellow fever mosquito, Aedes aegypti.</title>
        <authorList>
            <person name="Edwards M.J."/>
            <person name="Severson D.W."/>
            <person name="Hagedorn H.H."/>
        </authorList>
    </citation>
    <scope>NUCLEOTIDE SEQUENCE [GENOMIC DNA]</scope>
    <scope>TISSUE SPECIFICITY</scope>
    <scope>DEVELOPMENTAL STAGE</scope>
    <source>
        <strain>Rockefeller</strain>
    </source>
</reference>
<reference key="2">
    <citation type="journal article" date="2007" name="Science">
        <title>Genome sequence of Aedes aegypti, a major arbovirus vector.</title>
        <authorList>
            <person name="Nene V."/>
            <person name="Wortman J.R."/>
            <person name="Lawson D."/>
            <person name="Haas B.J."/>
            <person name="Kodira C.D."/>
            <person name="Tu Z.J."/>
            <person name="Loftus B.J."/>
            <person name="Xi Z."/>
            <person name="Megy K."/>
            <person name="Grabherr M."/>
            <person name="Ren Q."/>
            <person name="Zdobnov E.M."/>
            <person name="Lobo N.F."/>
            <person name="Campbell K.S."/>
            <person name="Brown S.E."/>
            <person name="Bonaldo M.F."/>
            <person name="Zhu J."/>
            <person name="Sinkins S.P."/>
            <person name="Hogenkamp D.G."/>
            <person name="Amedeo P."/>
            <person name="Arensburger P."/>
            <person name="Atkinson P.W."/>
            <person name="Bidwell S.L."/>
            <person name="Biedler J."/>
            <person name="Birney E."/>
            <person name="Bruggner R.V."/>
            <person name="Costas J."/>
            <person name="Coy M.R."/>
            <person name="Crabtree J."/>
            <person name="Crawford M."/>
            <person name="DeBruyn B."/>
            <person name="DeCaprio D."/>
            <person name="Eiglmeier K."/>
            <person name="Eisenstadt E."/>
            <person name="El-Dorry H."/>
            <person name="Gelbart W.M."/>
            <person name="Gomes S.L."/>
            <person name="Hammond M."/>
            <person name="Hannick L.I."/>
            <person name="Hogan J.R."/>
            <person name="Holmes M.H."/>
            <person name="Jaffe D."/>
            <person name="Johnston S.J."/>
            <person name="Kennedy R.C."/>
            <person name="Koo H."/>
            <person name="Kravitz S."/>
            <person name="Kriventseva E.V."/>
            <person name="Kulp D."/>
            <person name="Labutti K."/>
            <person name="Lee E."/>
            <person name="Li S."/>
            <person name="Lovin D.D."/>
            <person name="Mao C."/>
            <person name="Mauceli E."/>
            <person name="Menck C.F."/>
            <person name="Miller J.R."/>
            <person name="Montgomery P."/>
            <person name="Mori A."/>
            <person name="Nascimento A.L."/>
            <person name="Naveira H.F."/>
            <person name="Nusbaum C."/>
            <person name="O'Leary S.B."/>
            <person name="Orvis J."/>
            <person name="Pertea M."/>
            <person name="Quesneville H."/>
            <person name="Reidenbach K.R."/>
            <person name="Rogers Y.-H.C."/>
            <person name="Roth C.W."/>
            <person name="Schneider J.R."/>
            <person name="Schatz M."/>
            <person name="Shumway M."/>
            <person name="Stanke M."/>
            <person name="Stinson E.O."/>
            <person name="Tubio J.M.C."/>
            <person name="Vanzee J.P."/>
            <person name="Verjovski-Almeida S."/>
            <person name="Werner D."/>
            <person name="White O.R."/>
            <person name="Wyder S."/>
            <person name="Zeng Q."/>
            <person name="Zhao Q."/>
            <person name="Zhao Y."/>
            <person name="Hill C.A."/>
            <person name="Raikhel A.S."/>
            <person name="Soares M.B."/>
            <person name="Knudson D.L."/>
            <person name="Lee N.H."/>
            <person name="Galagan J."/>
            <person name="Salzberg S.L."/>
            <person name="Paulsen I.T."/>
            <person name="Dimopoulos G."/>
            <person name="Collins F.H."/>
            <person name="Bruce B."/>
            <person name="Fraser-Liggett C.M."/>
            <person name="Severson D.W."/>
        </authorList>
    </citation>
    <scope>NUCLEOTIDE SEQUENCE [LARGE SCALE GENOMIC DNA]</scope>
    <source>
        <strain>LVPib12</strain>
    </source>
</reference>
<reference key="3">
    <citation type="journal article" date="1993" name="Dev. Biol.">
        <title>Structure, expression, and hormonal control of genes from the mosquito, Aedes aegypti, which encode proteins similar to the vitelline membrane proteins of Drosophila melanogaster.</title>
        <authorList>
            <person name="Lin Y."/>
            <person name="Hamblin M.T."/>
            <person name="Edwards M.J."/>
            <person name="Barillas-Mury C."/>
            <person name="Kanost M.R."/>
            <person name="Knipple D.C."/>
            <person name="Wolfner M.F."/>
            <person name="Hagedorn H.H."/>
        </authorList>
    </citation>
    <scope>NUCLEOTIDE SEQUENCE [MRNA] OF 6-97</scope>
    <scope>DEVELOPMENTAL STAGE</scope>
</reference>
<reference key="4">
    <citation type="journal article" date="1990" name="FASEB J.">
        <title>Mosquito oostatic factor: a novel decapeptide modulating trypsin-like enzyme biosynthesis in the midgut.</title>
        <authorList>
            <person name="Borovsky D."/>
            <person name="Carlson D.A."/>
            <person name="Griffin P.R."/>
            <person name="Shabanowitz J."/>
            <person name="Hunt D.F."/>
        </authorList>
    </citation>
    <scope>PROTEIN SEQUENCE OF 20-29</scope>
    <scope>FUNCTION</scope>
    <scope>SUBCELLULAR LOCATION</scope>
    <scope>DEVELOPMENTAL STAGE</scope>
    <scope>MASS SPECTROMETRY</scope>
    <source>
        <strain>Vero beach</strain>
        <tissue>Ovary</tissue>
    </source>
</reference>
<reference key="5">
    <citation type="journal article" date="1993" name="Insect Biochem. Mol. Biol.">
        <title>Mass spectrometry and characterization of Aedes aegypti trypsin modulating oostatic factor (TMOF) and its analogs.</title>
        <authorList>
            <person name="Borovsky D."/>
            <person name="Carlson D.A."/>
            <person name="Griffin P.R."/>
            <person name="Shabanowitz J."/>
            <person name="Hunt D.F."/>
        </authorList>
    </citation>
    <scope>PROTEIN SEQUENCE OF 20-29</scope>
    <scope>FUNCTION</scope>
    <scope>IDENTIFICATION BY MASS SPECTROMETRY</scope>
    <source>
        <strain>Vero beach</strain>
        <tissue>Ovary</tissue>
    </source>
</reference>
<reference key="6">
    <citation type="journal article" date="2003" name="J. Exp. Biol.">
        <title>Trypsin-modulating oostatic factor: a potential new larvicide for mosquito control.</title>
        <authorList>
            <person name="Borovsky D."/>
        </authorList>
    </citation>
    <scope>FUNCTION</scope>
    <scope>SUBCELLULAR LOCATION</scope>
    <scope>DEVELOPMENTAL STAGE</scope>
    <scope>MUTAGENESIS OF 20-ASP--TYR-21</scope>
</reference>
<reference key="7">
    <citation type="journal article" date="1993" name="Biochem. Biophys. Res. Commun.">
        <title>Solution structure of trypsin modulating oostatic factor is a left-handed helix.</title>
        <authorList>
            <person name="Curto E.V."/>
            <person name="Jarpe M.A."/>
            <person name="Blalock J.E."/>
            <person name="Borovsky D."/>
            <person name="Krishna N.R."/>
        </authorList>
    </citation>
    <scope>STRUCTURE BY NMR OF 20-29</scope>
</reference>
<accession>P19425</accession>
<accession>Q26291</accession>
<accession>Q7JPT3</accession>
<name>V15A2_AEDAE</name>
<comment type="function">
    <text evidence="2 3 4">Has an oostatic activity. Inhibits trypsin biosynthesis in the midgut epithelial cells which indirectly reduces the vitellogenin concentration in the hemolymph resulting in inhibition of oocyte development.</text>
</comment>
<comment type="subcellular location">
    <subcellularLocation>
        <location evidence="2 3">Secreted</location>
    </subcellularLocation>
    <text>Secreted from the ovary, starting 18 hours after a blood meal, circulates in the hemolymph.</text>
</comment>
<comment type="tissue specificity">
    <text evidence="6">Expressed in the anterior region of the follicle cells.</text>
</comment>
<comment type="developmental stage">
    <text evidence="2 3 5 6">Synthesized and released from follicular epithelium 18-24 hours after a blood meal. Synthesis peaks at 36 hours and stops at 56 hours.</text>
</comment>
<comment type="mass spectrometry">
    <molecule>Trypsin-modulating oostatic factor</molecule>
</comment>
<comment type="miscellaneous">
    <text>Can potentially be used as a larvicide. The stable three-dimensional conformation of the decapeptide means it is not degraded by gut proteolytic enzymes and can traverse the gut epithelial cells into the hemolymph of adults and larvae. Hormone fed to different species of mosquito larvae stops food digestion and causes larval mortality. The tetrapeptide (DYPA) is as effective as the decapeptide.</text>
</comment>
<comment type="similarity">
    <text evidence="7">Belongs to the vitelline membrane protein family.</text>
</comment>
<sequence>MNKIIAALVLFTAVIGALADYPAPPPPPPKPYHAPPPPPYHAPPHHAPAPLHPVVHTYPVKAPAAKCGANLLVGCAPSVAHVPCVPVHPHPPPPAHY</sequence>
<gene>
    <name type="primary">15a-2</name>
</gene>
<feature type="signal peptide" evidence="3 4">
    <location>
        <begin position="1"/>
        <end position="19"/>
    </location>
</feature>
<feature type="chain" id="PRO_0000343657" description="Vitelline membrane protein 15a-2">
    <location>
        <begin position="20"/>
        <end position="97"/>
    </location>
</feature>
<feature type="peptide" id="PRO_0000044226" description="Trypsin-modulating oostatic factor">
    <location>
        <begin position="20"/>
        <end position="29"/>
    </location>
</feature>
<feature type="domain" description="VM">
    <location>
        <begin position="61"/>
        <end position="97"/>
    </location>
</feature>
<feature type="region of interest" description="Required for binding to the gut receptor">
    <location>
        <begin position="20"/>
        <end position="23"/>
    </location>
</feature>
<feature type="region of interest" description="Disordered" evidence="1">
    <location>
        <begin position="26"/>
        <end position="46"/>
    </location>
</feature>
<feature type="mutagenesis site" description="In TMOF(A); increased hormone activity." evidence="2">
    <original>DY</original>
    <variation>YD</variation>
    <location>
        <begin position="20"/>
        <end position="21"/>
    </location>
</feature>
<feature type="sequence conflict" description="In Ref. 3; AAB25307." evidence="7" ref="3">
    <original>S</original>
    <variation>A</variation>
    <location>
        <position position="78"/>
    </location>
</feature>
<keyword id="KW-0903">Direct protein sequencing</keyword>
<keyword id="KW-0372">Hormone</keyword>
<keyword id="KW-1185">Reference proteome</keyword>
<keyword id="KW-0964">Secreted</keyword>
<keyword id="KW-0732">Signal</keyword>
<dbReference type="EMBL" id="U91681">
    <property type="protein sequence ID" value="AAB51283.1"/>
    <property type="molecule type" value="Genomic_DNA"/>
</dbReference>
<dbReference type="EMBL" id="CH477949">
    <property type="status" value="NOT_ANNOTATED_CDS"/>
    <property type="molecule type" value="Genomic_DNA"/>
</dbReference>
<dbReference type="EMBL" id="S54556">
    <property type="protein sequence ID" value="AAB25307.1"/>
    <property type="molecule type" value="mRNA"/>
</dbReference>
<dbReference type="PIR" id="A36454">
    <property type="entry name" value="A36454"/>
</dbReference>
<dbReference type="PIR" id="B48831">
    <property type="entry name" value="B48831"/>
</dbReference>
<dbReference type="PaxDb" id="7159-AAEL017403-PA"/>
<dbReference type="EnsemblMetazoa" id="AAEL017403-RA">
    <property type="protein sequence ID" value="AAEL017403-PA"/>
    <property type="gene ID" value="AAEL017403"/>
</dbReference>
<dbReference type="GeneID" id="23687823"/>
<dbReference type="KEGG" id="aag:23687823"/>
<dbReference type="VEuPathDB" id="VectorBase:AAEL017403"/>
<dbReference type="HOGENOM" id="CLU_2348359_0_0_1"/>
<dbReference type="InParanoid" id="P19425"/>
<dbReference type="Proteomes" id="UP000008820">
    <property type="component" value="Chromosome 2"/>
</dbReference>
<dbReference type="Proteomes" id="UP000682892">
    <property type="component" value="Unassembled WGS sequence"/>
</dbReference>
<dbReference type="GO" id="GO:0005615">
    <property type="term" value="C:extracellular space"/>
    <property type="evidence" value="ECO:0000314"/>
    <property type="project" value="UniProtKB"/>
</dbReference>
<dbReference type="GO" id="GO:0005179">
    <property type="term" value="F:hormone activity"/>
    <property type="evidence" value="ECO:0007669"/>
    <property type="project" value="UniProtKB-KW"/>
</dbReference>
<dbReference type="GO" id="GO:0004867">
    <property type="term" value="F:serine-type endopeptidase inhibitor activity"/>
    <property type="evidence" value="ECO:0000315"/>
    <property type="project" value="UniProtKB"/>
</dbReference>
<dbReference type="GO" id="GO:0048599">
    <property type="term" value="P:oocyte development"/>
    <property type="evidence" value="ECO:0000315"/>
    <property type="project" value="UniProtKB"/>
</dbReference>
<organism>
    <name type="scientific">Aedes aegypti</name>
    <name type="common">Yellowfever mosquito</name>
    <name type="synonym">Culex aegypti</name>
    <dbReference type="NCBI Taxonomy" id="7159"/>
    <lineage>
        <taxon>Eukaryota</taxon>
        <taxon>Metazoa</taxon>
        <taxon>Ecdysozoa</taxon>
        <taxon>Arthropoda</taxon>
        <taxon>Hexapoda</taxon>
        <taxon>Insecta</taxon>
        <taxon>Pterygota</taxon>
        <taxon>Neoptera</taxon>
        <taxon>Endopterygota</taxon>
        <taxon>Diptera</taxon>
        <taxon>Nematocera</taxon>
        <taxon>Culicoidea</taxon>
        <taxon>Culicidae</taxon>
        <taxon>Culicinae</taxon>
        <taxon>Aedini</taxon>
        <taxon>Aedes</taxon>
        <taxon>Stegomyia</taxon>
    </lineage>
</organism>
<proteinExistence type="evidence at protein level"/>
<protein>
    <recommendedName>
        <fullName>Vitelline membrane protein 15a-2</fullName>
    </recommendedName>
    <component>
        <recommendedName>
            <fullName>Trypsin-modulating oostatic factor</fullName>
            <shortName>TMOF</shortName>
        </recommendedName>
        <alternativeName>
            <fullName>OOSH</fullName>
        </alternativeName>
    </component>
</protein>
<evidence type="ECO:0000256" key="1">
    <source>
        <dbReference type="SAM" id="MobiDB-lite"/>
    </source>
</evidence>
<evidence type="ECO:0000269" key="2">
    <source>
    </source>
</evidence>
<evidence type="ECO:0000269" key="3">
    <source>
    </source>
</evidence>
<evidence type="ECO:0000269" key="4">
    <source>
    </source>
</evidence>
<evidence type="ECO:0000269" key="5">
    <source>
    </source>
</evidence>
<evidence type="ECO:0000269" key="6">
    <source>
    </source>
</evidence>
<evidence type="ECO:0000305" key="7"/>